<sequence length="263" mass="28820">MISYDDQVLVSYSNQRWEEAEAFSSQFGLRLVALEALPAKSDRAVYLLNFSDTRVELVNWREQAPGPVFVDFVEGALAYRREHGGGRGEMVAKSVGLKGEVKCLNVLDATAGLGRDAYVLAALGCHVVMYERNPLVHALLADGLRRALECADAASVVSRMTLHLGEAFNTFPDGIDVVYLDPMFPERRKSSAVKKEMQAFKDIVGADPDADELLAAALRQEVKRIVVKRPKGAPCLLGREPSFTVTGKSGRFDVYALRKLTGG</sequence>
<keyword id="KW-0963">Cytoplasm</keyword>
<keyword id="KW-0489">Methyltransferase</keyword>
<keyword id="KW-1185">Reference proteome</keyword>
<keyword id="KW-0698">rRNA processing</keyword>
<keyword id="KW-0949">S-adenosyl-L-methionine</keyword>
<keyword id="KW-0808">Transferase</keyword>
<accession>Q2SL17</accession>
<dbReference type="EC" id="2.1.1.242" evidence="1"/>
<dbReference type="EMBL" id="CP000155">
    <property type="protein sequence ID" value="ABC28657.1"/>
    <property type="molecule type" value="Genomic_DNA"/>
</dbReference>
<dbReference type="RefSeq" id="WP_011395729.1">
    <property type="nucleotide sequence ID" value="NC_007645.1"/>
</dbReference>
<dbReference type="SMR" id="Q2SL17"/>
<dbReference type="STRING" id="349521.HCH_01818"/>
<dbReference type="KEGG" id="hch:HCH_01818"/>
<dbReference type="eggNOG" id="COG0500">
    <property type="taxonomic scope" value="Bacteria"/>
</dbReference>
<dbReference type="HOGENOM" id="CLU_076324_0_1_6"/>
<dbReference type="OrthoDB" id="3191794at2"/>
<dbReference type="Proteomes" id="UP000000238">
    <property type="component" value="Chromosome"/>
</dbReference>
<dbReference type="GO" id="GO:0005737">
    <property type="term" value="C:cytoplasm"/>
    <property type="evidence" value="ECO:0007669"/>
    <property type="project" value="UniProtKB-SubCell"/>
</dbReference>
<dbReference type="GO" id="GO:0008990">
    <property type="term" value="F:rRNA (guanine-N2-)-methyltransferase activity"/>
    <property type="evidence" value="ECO:0007669"/>
    <property type="project" value="UniProtKB-UniRule"/>
</dbReference>
<dbReference type="Gene3D" id="3.40.50.150">
    <property type="entry name" value="Vaccinia Virus protein VP39"/>
    <property type="match status" value="1"/>
</dbReference>
<dbReference type="HAMAP" id="MF_01523">
    <property type="entry name" value="16SrRNA_methyltr_J"/>
    <property type="match status" value="1"/>
</dbReference>
<dbReference type="InterPro" id="IPR007536">
    <property type="entry name" value="16SrRNA_methylTrfase_J"/>
</dbReference>
<dbReference type="InterPro" id="IPR029063">
    <property type="entry name" value="SAM-dependent_MTases_sf"/>
</dbReference>
<dbReference type="PANTHER" id="PTHR36112">
    <property type="entry name" value="RIBOSOMAL RNA SMALL SUBUNIT METHYLTRANSFERASE J"/>
    <property type="match status" value="1"/>
</dbReference>
<dbReference type="PANTHER" id="PTHR36112:SF1">
    <property type="entry name" value="RIBOSOMAL RNA SMALL SUBUNIT METHYLTRANSFERASE J"/>
    <property type="match status" value="1"/>
</dbReference>
<dbReference type="Pfam" id="PF04445">
    <property type="entry name" value="SAM_MT"/>
    <property type="match status" value="1"/>
</dbReference>
<dbReference type="SUPFAM" id="SSF53335">
    <property type="entry name" value="S-adenosyl-L-methionine-dependent methyltransferases"/>
    <property type="match status" value="1"/>
</dbReference>
<name>RSMJ_HAHCH</name>
<organism>
    <name type="scientific">Hahella chejuensis (strain KCTC 2396)</name>
    <dbReference type="NCBI Taxonomy" id="349521"/>
    <lineage>
        <taxon>Bacteria</taxon>
        <taxon>Pseudomonadati</taxon>
        <taxon>Pseudomonadota</taxon>
        <taxon>Gammaproteobacteria</taxon>
        <taxon>Oceanospirillales</taxon>
        <taxon>Hahellaceae</taxon>
        <taxon>Hahella</taxon>
    </lineage>
</organism>
<gene>
    <name evidence="1" type="primary">rsmJ</name>
    <name type="ordered locus">HCH_01818</name>
</gene>
<reference key="1">
    <citation type="journal article" date="2005" name="Nucleic Acids Res.">
        <title>Genomic blueprint of Hahella chejuensis, a marine microbe producing an algicidal agent.</title>
        <authorList>
            <person name="Jeong H."/>
            <person name="Yim J.H."/>
            <person name="Lee C."/>
            <person name="Choi S.-H."/>
            <person name="Park Y.K."/>
            <person name="Yoon S.H."/>
            <person name="Hur C.-G."/>
            <person name="Kang H.-Y."/>
            <person name="Kim D."/>
            <person name="Lee H.H."/>
            <person name="Park K.H."/>
            <person name="Park S.-H."/>
            <person name="Park H.-S."/>
            <person name="Lee H.K."/>
            <person name="Oh T.K."/>
            <person name="Kim J.F."/>
        </authorList>
    </citation>
    <scope>NUCLEOTIDE SEQUENCE [LARGE SCALE GENOMIC DNA]</scope>
    <source>
        <strain>KCTC 2396</strain>
    </source>
</reference>
<protein>
    <recommendedName>
        <fullName evidence="1">Ribosomal RNA small subunit methyltransferase J</fullName>
        <ecNumber evidence="1">2.1.1.242</ecNumber>
    </recommendedName>
    <alternativeName>
        <fullName evidence="1">16S rRNA m2G1516 methyltransferase</fullName>
    </alternativeName>
    <alternativeName>
        <fullName evidence="1">rRNA (guanine-N(2)-)-methyltransferase</fullName>
    </alternativeName>
</protein>
<feature type="chain" id="PRO_0000244273" description="Ribosomal RNA small subunit methyltransferase J">
    <location>
        <begin position="1"/>
        <end position="263"/>
    </location>
</feature>
<feature type="binding site" evidence="1">
    <location>
        <begin position="115"/>
        <end position="116"/>
    </location>
    <ligand>
        <name>S-adenosyl-L-methionine</name>
        <dbReference type="ChEBI" id="CHEBI:59789"/>
    </ligand>
</feature>
<feature type="binding site" evidence="1">
    <location>
        <begin position="131"/>
        <end position="132"/>
    </location>
    <ligand>
        <name>S-adenosyl-L-methionine</name>
        <dbReference type="ChEBI" id="CHEBI:59789"/>
    </ligand>
</feature>
<feature type="binding site" evidence="1">
    <location>
        <position position="181"/>
    </location>
    <ligand>
        <name>S-adenosyl-L-methionine</name>
        <dbReference type="ChEBI" id="CHEBI:59789"/>
    </ligand>
</feature>
<proteinExistence type="inferred from homology"/>
<evidence type="ECO:0000255" key="1">
    <source>
        <dbReference type="HAMAP-Rule" id="MF_01523"/>
    </source>
</evidence>
<comment type="function">
    <text evidence="1">Specifically methylates the guanosine in position 1516 of 16S rRNA.</text>
</comment>
<comment type="catalytic activity">
    <reaction evidence="1">
        <text>guanosine(1516) in 16S rRNA + S-adenosyl-L-methionine = N(2)-methylguanosine(1516) in 16S rRNA + S-adenosyl-L-homocysteine + H(+)</text>
        <dbReference type="Rhea" id="RHEA:43220"/>
        <dbReference type="Rhea" id="RHEA-COMP:10412"/>
        <dbReference type="Rhea" id="RHEA-COMP:10413"/>
        <dbReference type="ChEBI" id="CHEBI:15378"/>
        <dbReference type="ChEBI" id="CHEBI:57856"/>
        <dbReference type="ChEBI" id="CHEBI:59789"/>
        <dbReference type="ChEBI" id="CHEBI:74269"/>
        <dbReference type="ChEBI" id="CHEBI:74481"/>
        <dbReference type="EC" id="2.1.1.242"/>
    </reaction>
</comment>
<comment type="subcellular location">
    <subcellularLocation>
        <location evidence="1">Cytoplasm</location>
    </subcellularLocation>
</comment>
<comment type="similarity">
    <text evidence="1">Belongs to the methyltransferase superfamily. RsmJ family.</text>
</comment>